<keyword id="KW-0012">Acyltransferase</keyword>
<keyword id="KW-0276">Fatty acid metabolism</keyword>
<keyword id="KW-0443">Lipid metabolism</keyword>
<keyword id="KW-1185">Reference proteome</keyword>
<keyword id="KW-0808">Transferase</keyword>
<accession>P9WPF2</accession>
<accession>L0T8X6</accession>
<accession>O06587</accession>
<accession>Q7D871</accession>
<feature type="chain" id="PRO_0000426962" description="Methyl-branched alkylpyrone synthesis polyketide synthase-like Pks11">
    <location>
        <begin position="1"/>
        <end position="353"/>
    </location>
</feature>
<feature type="active site" description="Nucleophile" evidence="1">
    <location>
        <position position="138"/>
    </location>
</feature>
<feature type="binding site" evidence="1">
    <location>
        <position position="180"/>
    </location>
    <ligand>
        <name>substrate</name>
    </ligand>
</feature>
<feature type="binding site" evidence="1">
    <location>
        <position position="241"/>
    </location>
    <ligand>
        <name>substrate</name>
    </ligand>
</feature>
<feature type="binding site" evidence="1">
    <location>
        <begin position="277"/>
        <end position="282"/>
    </location>
    <ligand>
        <name>substrate</name>
    </ligand>
</feature>
<feature type="binding site" evidence="1">
    <location>
        <position position="312"/>
    </location>
    <ligand>
        <name>substrate</name>
    </ligand>
</feature>
<protein>
    <recommendedName>
        <fullName evidence="1">Methyl-branched alkylpyrone synthesis polyketide synthase-like Pks11</fullName>
        <ecNumber evidence="1">2.3.1.-</ecNumber>
    </recommendedName>
    <alternativeName>
        <fullName evidence="1">Methyl-branched alkylpyrone synthesis polyketide synthase type III Pks11</fullName>
    </alternativeName>
</protein>
<reference key="1">
    <citation type="journal article" date="2002" name="J. Bacteriol.">
        <title>Whole-genome comparison of Mycobacterium tuberculosis clinical and laboratory strains.</title>
        <authorList>
            <person name="Fleischmann R.D."/>
            <person name="Alland D."/>
            <person name="Eisen J.A."/>
            <person name="Carpenter L."/>
            <person name="White O."/>
            <person name="Peterson J.D."/>
            <person name="DeBoy R.T."/>
            <person name="Dodson R.J."/>
            <person name="Gwinn M.L."/>
            <person name="Haft D.H."/>
            <person name="Hickey E.K."/>
            <person name="Kolonay J.F."/>
            <person name="Nelson W.C."/>
            <person name="Umayam L.A."/>
            <person name="Ermolaeva M.D."/>
            <person name="Salzberg S.L."/>
            <person name="Delcher A."/>
            <person name="Utterback T.R."/>
            <person name="Weidman J.F."/>
            <person name="Khouri H.M."/>
            <person name="Gill J."/>
            <person name="Mikula A."/>
            <person name="Bishai W."/>
            <person name="Jacobs W.R. Jr."/>
            <person name="Venter J.C."/>
            <person name="Fraser C.M."/>
        </authorList>
    </citation>
    <scope>NUCLEOTIDE SEQUENCE [LARGE SCALE GENOMIC DNA]</scope>
    <source>
        <strain>CDC 1551 / Oshkosh</strain>
    </source>
</reference>
<organism>
    <name type="scientific">Mycobacterium tuberculosis (strain CDC 1551 / Oshkosh)</name>
    <dbReference type="NCBI Taxonomy" id="83331"/>
    <lineage>
        <taxon>Bacteria</taxon>
        <taxon>Bacillati</taxon>
        <taxon>Actinomycetota</taxon>
        <taxon>Actinomycetes</taxon>
        <taxon>Mycobacteriales</taxon>
        <taxon>Mycobacteriaceae</taxon>
        <taxon>Mycobacterium</taxon>
        <taxon>Mycobacterium tuberculosis complex</taxon>
    </lineage>
</organism>
<gene>
    <name type="primary">pks11</name>
    <name type="ordered locus">MT1705</name>
</gene>
<name>PKS11_MYCTO</name>
<sequence>MSVIAGVFGALPPHRYSQSEITDSFVEFPGLKEHEEIIRRLHAAAKVNGRHLVLPLQQYPSLTDFGDANEIFIEKAVDLGVEALLGALDDANLRPSDIDMIATATVTGVAVPSLDARIAGRLGLRPDVRRMPLFGLGCVAGAAGVARLRDYLRGAPDDVAVLVSVELCSLTYPAVKPTVSSLVGTALFGDGAAAVVAVGDRRAEQVRAGGPDILDSRSSLYPDSLHIMGWDVGSHGLRLRLSPDLTNLIERYLANDVTTFLDAHRLTKDDIGAWVSHPGGPKVIDAVATSLALPPEALELTWRSLGEIGNLSSASILHILRDTIEKRPPSGSAGLMLAMGPGFCTELVLLRWR</sequence>
<evidence type="ECO:0000250" key="1">
    <source>
        <dbReference type="UniProtKB" id="P9WPF3"/>
    </source>
</evidence>
<evidence type="ECO:0000305" key="2"/>
<dbReference type="EC" id="2.3.1.-" evidence="1"/>
<dbReference type="EMBL" id="AE000516">
    <property type="protein sequence ID" value="AAK45972.1"/>
    <property type="molecule type" value="Genomic_DNA"/>
</dbReference>
<dbReference type="PIR" id="C70985">
    <property type="entry name" value="C70985"/>
</dbReference>
<dbReference type="RefSeq" id="WP_003408248.1">
    <property type="nucleotide sequence ID" value="NZ_KK341227.1"/>
</dbReference>
<dbReference type="SMR" id="P9WPF2"/>
<dbReference type="KEGG" id="mtc:MT1705"/>
<dbReference type="PATRIC" id="fig|83331.31.peg.1830"/>
<dbReference type="HOGENOM" id="CLU_034992_0_1_11"/>
<dbReference type="UniPathway" id="UPA00094"/>
<dbReference type="Proteomes" id="UP000001020">
    <property type="component" value="Chromosome"/>
</dbReference>
<dbReference type="GO" id="GO:0016747">
    <property type="term" value="F:acyltransferase activity, transferring groups other than amino-acyl groups"/>
    <property type="evidence" value="ECO:0007669"/>
    <property type="project" value="InterPro"/>
</dbReference>
<dbReference type="GO" id="GO:0006633">
    <property type="term" value="P:fatty acid biosynthetic process"/>
    <property type="evidence" value="ECO:0007669"/>
    <property type="project" value="UniProtKB-UniPathway"/>
</dbReference>
<dbReference type="GO" id="GO:0030639">
    <property type="term" value="P:polyketide biosynthetic process"/>
    <property type="evidence" value="ECO:0007669"/>
    <property type="project" value="TreeGrafter"/>
</dbReference>
<dbReference type="CDD" id="cd00831">
    <property type="entry name" value="CHS_like"/>
    <property type="match status" value="1"/>
</dbReference>
<dbReference type="FunFam" id="3.40.47.10:FF:000053">
    <property type="entry name" value="Alpha-pyrone synthesis polyketide synthase"/>
    <property type="match status" value="1"/>
</dbReference>
<dbReference type="FunFam" id="3.40.47.10:FF:000014">
    <property type="entry name" value="Chalcone synthase 1"/>
    <property type="match status" value="1"/>
</dbReference>
<dbReference type="Gene3D" id="3.40.47.10">
    <property type="match status" value="2"/>
</dbReference>
<dbReference type="InterPro" id="IPR012328">
    <property type="entry name" value="Chalcone/stilbene_synt_C"/>
</dbReference>
<dbReference type="InterPro" id="IPR001099">
    <property type="entry name" value="Chalcone/stilbene_synt_N"/>
</dbReference>
<dbReference type="InterPro" id="IPR011141">
    <property type="entry name" value="Polyketide_synthase_type-III"/>
</dbReference>
<dbReference type="InterPro" id="IPR016039">
    <property type="entry name" value="Thiolase-like"/>
</dbReference>
<dbReference type="PANTHER" id="PTHR11877:SF99">
    <property type="entry name" value="1,3,6,8-TETRAHYDROXYNAPHTHALENE SYNTHASE"/>
    <property type="match status" value="1"/>
</dbReference>
<dbReference type="PANTHER" id="PTHR11877">
    <property type="entry name" value="HYDROXYMETHYLGLUTARYL-COA SYNTHASE"/>
    <property type="match status" value="1"/>
</dbReference>
<dbReference type="Pfam" id="PF02797">
    <property type="entry name" value="Chal_sti_synt_C"/>
    <property type="match status" value="1"/>
</dbReference>
<dbReference type="Pfam" id="PF00195">
    <property type="entry name" value="Chal_sti_synt_N"/>
    <property type="match status" value="1"/>
</dbReference>
<dbReference type="PIRSF" id="PIRSF000451">
    <property type="entry name" value="PKS_III"/>
    <property type="match status" value="1"/>
</dbReference>
<dbReference type="SUPFAM" id="SSF53901">
    <property type="entry name" value="Thiolase-like"/>
    <property type="match status" value="1"/>
</dbReference>
<comment type="function">
    <text evidence="1">Involved in the biosynthesis of methyl-branched alkylpyrones. Pks11 catalyzes the extension of medium- and long-chain aliphatic acyl-CoA substrates by using malonyl-CoA and methylmalonyl-CoA as extender molecules to synthesize polyketide products. Palmitoyl-CoA or a similar long chain fatty acid derivative is the likely substrate in vivo.</text>
</comment>
<comment type="pathway">
    <text evidence="1">Lipid metabolism; fatty acid biosynthesis.</text>
</comment>
<comment type="subunit">
    <text evidence="1">Homodimer.</text>
</comment>
<comment type="similarity">
    <text evidence="2">Belongs to the thiolase-like superfamily. Chalcone/stilbene synthases family.</text>
</comment>
<proteinExistence type="inferred from homology"/>